<protein>
    <recommendedName>
        <fullName evidence="1">Disulfide bond formation protein B</fullName>
    </recommendedName>
    <alternativeName>
        <fullName evidence="1">Disulfide oxidoreductase</fullName>
    </alternativeName>
</protein>
<reference key="1">
    <citation type="submission" date="2006-02" db="EMBL/GenBank/DDBJ databases">
        <title>Complete sequence of chromosome of Rhodoferax ferrireducens DSM 15236.</title>
        <authorList>
            <person name="Copeland A."/>
            <person name="Lucas S."/>
            <person name="Lapidus A."/>
            <person name="Barry K."/>
            <person name="Detter J.C."/>
            <person name="Glavina del Rio T."/>
            <person name="Hammon N."/>
            <person name="Israni S."/>
            <person name="Pitluck S."/>
            <person name="Brettin T."/>
            <person name="Bruce D."/>
            <person name="Han C."/>
            <person name="Tapia R."/>
            <person name="Gilna P."/>
            <person name="Kiss H."/>
            <person name="Schmutz J."/>
            <person name="Larimer F."/>
            <person name="Land M."/>
            <person name="Kyrpides N."/>
            <person name="Ivanova N."/>
            <person name="Richardson P."/>
        </authorList>
    </citation>
    <scope>NUCLEOTIDE SEQUENCE [LARGE SCALE GENOMIC DNA]</scope>
    <source>
        <strain>ATCC BAA-621 / DSM 15236 / T118</strain>
    </source>
</reference>
<organism>
    <name type="scientific">Albidiferax ferrireducens (strain ATCC BAA-621 / DSM 15236 / T118)</name>
    <name type="common">Rhodoferax ferrireducens</name>
    <dbReference type="NCBI Taxonomy" id="338969"/>
    <lineage>
        <taxon>Bacteria</taxon>
        <taxon>Pseudomonadati</taxon>
        <taxon>Pseudomonadota</taxon>
        <taxon>Betaproteobacteria</taxon>
        <taxon>Burkholderiales</taxon>
        <taxon>Comamonadaceae</taxon>
        <taxon>Rhodoferax</taxon>
    </lineage>
</organism>
<comment type="function">
    <text evidence="1">Required for disulfide bond formation in some periplasmic proteins. Acts by oxidizing the DsbA protein.</text>
</comment>
<comment type="subcellular location">
    <subcellularLocation>
        <location evidence="1">Cell inner membrane</location>
        <topology evidence="1">Multi-pass membrane protein</topology>
    </subcellularLocation>
</comment>
<comment type="similarity">
    <text evidence="1">Belongs to the DsbB family.</text>
</comment>
<name>DSBB_ALBFT</name>
<gene>
    <name evidence="1" type="primary">dsbB</name>
    <name type="ordered locus">Rfer_2104</name>
</gene>
<dbReference type="EMBL" id="CP000267">
    <property type="protein sequence ID" value="ABD69828.1"/>
    <property type="molecule type" value="Genomic_DNA"/>
</dbReference>
<dbReference type="RefSeq" id="WP_011464396.1">
    <property type="nucleotide sequence ID" value="NC_007908.1"/>
</dbReference>
<dbReference type="SMR" id="Q21WM5"/>
<dbReference type="STRING" id="338969.Rfer_2104"/>
<dbReference type="KEGG" id="rfr:Rfer_2104"/>
<dbReference type="eggNOG" id="COG1495">
    <property type="taxonomic scope" value="Bacteria"/>
</dbReference>
<dbReference type="HOGENOM" id="CLU_098660_1_0_4"/>
<dbReference type="OrthoDB" id="3711263at2"/>
<dbReference type="Proteomes" id="UP000008332">
    <property type="component" value="Chromosome"/>
</dbReference>
<dbReference type="GO" id="GO:0005886">
    <property type="term" value="C:plasma membrane"/>
    <property type="evidence" value="ECO:0007669"/>
    <property type="project" value="UniProtKB-SubCell"/>
</dbReference>
<dbReference type="GO" id="GO:0009055">
    <property type="term" value="F:electron transfer activity"/>
    <property type="evidence" value="ECO:0007669"/>
    <property type="project" value="UniProtKB-UniRule"/>
</dbReference>
<dbReference type="GO" id="GO:0015035">
    <property type="term" value="F:protein-disulfide reductase activity"/>
    <property type="evidence" value="ECO:0007669"/>
    <property type="project" value="UniProtKB-UniRule"/>
</dbReference>
<dbReference type="GO" id="GO:0006457">
    <property type="term" value="P:protein folding"/>
    <property type="evidence" value="ECO:0007669"/>
    <property type="project" value="InterPro"/>
</dbReference>
<dbReference type="Gene3D" id="1.20.1550.10">
    <property type="entry name" value="DsbB-like"/>
    <property type="match status" value="1"/>
</dbReference>
<dbReference type="HAMAP" id="MF_00286">
    <property type="entry name" value="DsbB"/>
    <property type="match status" value="1"/>
</dbReference>
<dbReference type="InterPro" id="IPR003752">
    <property type="entry name" value="DiS_bond_form_DsbB/BdbC"/>
</dbReference>
<dbReference type="InterPro" id="IPR022920">
    <property type="entry name" value="Disulphide_bond_form_DsbB"/>
</dbReference>
<dbReference type="InterPro" id="IPR050183">
    <property type="entry name" value="DsbB"/>
</dbReference>
<dbReference type="InterPro" id="IPR023380">
    <property type="entry name" value="DsbB-like_sf"/>
</dbReference>
<dbReference type="PANTHER" id="PTHR36570">
    <property type="entry name" value="DISULFIDE BOND FORMATION PROTEIN B"/>
    <property type="match status" value="1"/>
</dbReference>
<dbReference type="PANTHER" id="PTHR36570:SF3">
    <property type="entry name" value="DISULFIDE BOND FORMATION PROTEIN B"/>
    <property type="match status" value="1"/>
</dbReference>
<dbReference type="Pfam" id="PF02600">
    <property type="entry name" value="DsbB"/>
    <property type="match status" value="1"/>
</dbReference>
<dbReference type="SUPFAM" id="SSF158442">
    <property type="entry name" value="DsbB-like"/>
    <property type="match status" value="1"/>
</dbReference>
<evidence type="ECO:0000255" key="1">
    <source>
        <dbReference type="HAMAP-Rule" id="MF_00286"/>
    </source>
</evidence>
<keyword id="KW-0997">Cell inner membrane</keyword>
<keyword id="KW-1003">Cell membrane</keyword>
<keyword id="KW-0143">Chaperone</keyword>
<keyword id="KW-1015">Disulfide bond</keyword>
<keyword id="KW-0249">Electron transport</keyword>
<keyword id="KW-0472">Membrane</keyword>
<keyword id="KW-0560">Oxidoreductase</keyword>
<keyword id="KW-0676">Redox-active center</keyword>
<keyword id="KW-1185">Reference proteome</keyword>
<keyword id="KW-0812">Transmembrane</keyword>
<keyword id="KW-1133">Transmembrane helix</keyword>
<keyword id="KW-0813">Transport</keyword>
<feature type="chain" id="PRO_0000298402" description="Disulfide bond formation protein B">
    <location>
        <begin position="1"/>
        <end position="174"/>
    </location>
</feature>
<feature type="topological domain" description="Cytoplasmic" evidence="1">
    <location>
        <begin position="1"/>
        <end position="17"/>
    </location>
</feature>
<feature type="transmembrane region" description="Helical" evidence="1">
    <location>
        <begin position="18"/>
        <end position="34"/>
    </location>
</feature>
<feature type="topological domain" description="Periplasmic" evidence="1">
    <location>
        <begin position="35"/>
        <end position="52"/>
    </location>
</feature>
<feature type="transmembrane region" description="Helical" evidence="1">
    <location>
        <begin position="53"/>
        <end position="67"/>
    </location>
</feature>
<feature type="topological domain" description="Cytoplasmic" evidence="1">
    <location>
        <begin position="68"/>
        <end position="74"/>
    </location>
</feature>
<feature type="transmembrane region" description="Helical" evidence="1">
    <location>
        <begin position="75"/>
        <end position="92"/>
    </location>
</feature>
<feature type="topological domain" description="Periplasmic" evidence="1">
    <location>
        <begin position="93"/>
        <end position="148"/>
    </location>
</feature>
<feature type="transmembrane region" description="Helical" evidence="1">
    <location>
        <begin position="149"/>
        <end position="167"/>
    </location>
</feature>
<feature type="topological domain" description="Cytoplasmic" evidence="1">
    <location>
        <begin position="168"/>
        <end position="174"/>
    </location>
</feature>
<feature type="disulfide bond" description="Redox-active" evidence="1">
    <location>
        <begin position="44"/>
        <end position="47"/>
    </location>
</feature>
<feature type="disulfide bond" description="Redox-active" evidence="1">
    <location>
        <begin position="107"/>
        <end position="134"/>
    </location>
</feature>
<sequence length="174" mass="19040">MSFQVVTGWLDNSPRRIFAFVSLASIGMLAFGQYLQHVVGLEPCPMCIVQRYALVLVAIIAGLTGASGRKGLHLGGAVLMLGSSGFGAYVAARQSWLQWYPPEVVSCGRDFYGMIETFPLQRAIPMIFKGSGDCSKVDWTFLGGSIANWTFVVFGLIVLLSLALIWRRVSRRVS</sequence>
<accession>Q21WM5</accession>
<proteinExistence type="inferred from homology"/>